<evidence type="ECO:0000250" key="1"/>
<evidence type="ECO:0000305" key="2"/>
<reference key="1">
    <citation type="journal article" date="1994" name="Mol. Microbiol.">
        <title>Analysis of the rnc locus of Coxiella burnetii.</title>
        <authorList>
            <person name="Zuber M."/>
            <person name="Hoover T.A."/>
            <person name="Powell B.S."/>
            <person name="Court D.L."/>
        </authorList>
    </citation>
    <scope>NUCLEOTIDE SEQUENCE [GENOMIC DNA]</scope>
    <source>
        <strain>CB9MIC7</strain>
    </source>
</reference>
<reference key="2">
    <citation type="journal article" date="2003" name="Proc. Natl. Acad. Sci. U.S.A.">
        <title>Complete genome sequence of the Q-fever pathogen, Coxiella burnetii.</title>
        <authorList>
            <person name="Seshadri R."/>
            <person name="Paulsen I.T."/>
            <person name="Eisen J.A."/>
            <person name="Read T.D."/>
            <person name="Nelson K.E."/>
            <person name="Nelson W.C."/>
            <person name="Ward N.L."/>
            <person name="Tettelin H."/>
            <person name="Davidsen T.M."/>
            <person name="Beanan M.J."/>
            <person name="DeBoy R.T."/>
            <person name="Daugherty S.C."/>
            <person name="Brinkac L.M."/>
            <person name="Madupu R."/>
            <person name="Dodson R.J."/>
            <person name="Khouri H.M."/>
            <person name="Lee K.H."/>
            <person name="Carty H.A."/>
            <person name="Scanlan D."/>
            <person name="Heinzen R.A."/>
            <person name="Thompson H.A."/>
            <person name="Samuel J.E."/>
            <person name="Fraser C.M."/>
            <person name="Heidelberg J.F."/>
        </authorList>
    </citation>
    <scope>NUCLEOTIDE SEQUENCE [LARGE SCALE GENOMIC DNA]</scope>
    <source>
        <strain>RSA 493 / Nine Mile phase I</strain>
    </source>
</reference>
<protein>
    <recommendedName>
        <fullName>DNA repair protein RecO</fullName>
    </recommendedName>
    <alternativeName>
        <fullName>Recombination protein O</fullName>
    </alternativeName>
</protein>
<keyword id="KW-0227">DNA damage</keyword>
<keyword id="KW-0233">DNA recombination</keyword>
<keyword id="KW-0234">DNA repair</keyword>
<keyword id="KW-1185">Reference proteome</keyword>
<proteinExistence type="inferred from homology"/>
<gene>
    <name type="primary">recO</name>
    <name type="ordered locus">CBU_1501</name>
</gene>
<dbReference type="EMBL" id="L27436">
    <property type="protein sequence ID" value="AAA69692.1"/>
    <property type="molecule type" value="Genomic_DNA"/>
</dbReference>
<dbReference type="EMBL" id="AE016828">
    <property type="protein sequence ID" value="AAO90998.1"/>
    <property type="molecule type" value="Genomic_DNA"/>
</dbReference>
<dbReference type="PIR" id="S60769">
    <property type="entry name" value="S60769"/>
</dbReference>
<dbReference type="RefSeq" id="NP_820484.1">
    <property type="nucleotide sequence ID" value="NC_002971.4"/>
</dbReference>
<dbReference type="RefSeq" id="WP_005772032.1">
    <property type="nucleotide sequence ID" value="NZ_CCYB01000022.1"/>
</dbReference>
<dbReference type="SMR" id="P51838"/>
<dbReference type="STRING" id="227377.CBU_1501"/>
<dbReference type="EnsemblBacteria" id="AAO90998">
    <property type="protein sequence ID" value="AAO90998"/>
    <property type="gene ID" value="CBU_1501"/>
</dbReference>
<dbReference type="GeneID" id="1209411"/>
<dbReference type="KEGG" id="cbu:CBU_1501"/>
<dbReference type="PATRIC" id="fig|227377.7.peg.1503"/>
<dbReference type="eggNOG" id="COG1381">
    <property type="taxonomic scope" value="Bacteria"/>
</dbReference>
<dbReference type="HOGENOM" id="CLU_066645_1_0_6"/>
<dbReference type="OrthoDB" id="9804792at2"/>
<dbReference type="Proteomes" id="UP000002671">
    <property type="component" value="Chromosome"/>
</dbReference>
<dbReference type="GO" id="GO:0043590">
    <property type="term" value="C:bacterial nucleoid"/>
    <property type="evidence" value="ECO:0000318"/>
    <property type="project" value="GO_Central"/>
</dbReference>
<dbReference type="GO" id="GO:0006310">
    <property type="term" value="P:DNA recombination"/>
    <property type="evidence" value="ECO:0007669"/>
    <property type="project" value="UniProtKB-UniRule"/>
</dbReference>
<dbReference type="GO" id="GO:0006302">
    <property type="term" value="P:double-strand break repair"/>
    <property type="evidence" value="ECO:0000318"/>
    <property type="project" value="GO_Central"/>
</dbReference>
<dbReference type="Gene3D" id="2.40.50.140">
    <property type="entry name" value="Nucleic acid-binding proteins"/>
    <property type="match status" value="1"/>
</dbReference>
<dbReference type="Gene3D" id="1.20.1440.120">
    <property type="entry name" value="Recombination protein O, C-terminal domain"/>
    <property type="match status" value="1"/>
</dbReference>
<dbReference type="HAMAP" id="MF_00201">
    <property type="entry name" value="RecO"/>
    <property type="match status" value="1"/>
</dbReference>
<dbReference type="InterPro" id="IPR037278">
    <property type="entry name" value="ARFGAP/RecO"/>
</dbReference>
<dbReference type="InterPro" id="IPR022572">
    <property type="entry name" value="DNA_rep/recomb_RecO_N"/>
</dbReference>
<dbReference type="InterPro" id="IPR012340">
    <property type="entry name" value="NA-bd_OB-fold"/>
</dbReference>
<dbReference type="InterPro" id="IPR003717">
    <property type="entry name" value="RecO"/>
</dbReference>
<dbReference type="InterPro" id="IPR042242">
    <property type="entry name" value="RecO_C"/>
</dbReference>
<dbReference type="NCBIfam" id="TIGR00613">
    <property type="entry name" value="reco"/>
    <property type="match status" value="1"/>
</dbReference>
<dbReference type="PANTHER" id="PTHR33991">
    <property type="entry name" value="DNA REPAIR PROTEIN RECO"/>
    <property type="match status" value="1"/>
</dbReference>
<dbReference type="PANTHER" id="PTHR33991:SF1">
    <property type="entry name" value="DNA REPAIR PROTEIN RECO"/>
    <property type="match status" value="1"/>
</dbReference>
<dbReference type="Pfam" id="PF02565">
    <property type="entry name" value="RecO_C"/>
    <property type="match status" value="1"/>
</dbReference>
<dbReference type="Pfam" id="PF11967">
    <property type="entry name" value="RecO_N"/>
    <property type="match status" value="1"/>
</dbReference>
<dbReference type="SUPFAM" id="SSF57863">
    <property type="entry name" value="ArfGap/RecO-like zinc finger"/>
    <property type="match status" value="1"/>
</dbReference>
<dbReference type="SUPFAM" id="SSF50249">
    <property type="entry name" value="Nucleic acid-binding proteins"/>
    <property type="match status" value="1"/>
</dbReference>
<sequence>MTKRVALEPAFILHRRPYSNTSLILELLTPNHGRVCALARSARGLKSRYKGKLELFSPLLISWSGRSDLKFLGDVEANGMPYLLEGEALLCGFYLNELLIRLLHHDDPYLRLFHHYQNTLEKLVNGRLEATLRCFEKQLLDELGYGLPLSCDVEMKLPFKPDQFYQYLPDRGFLLCEKSEERDVFSGKSLLALQEESFSDESSLKEIKYLMRLTLNRLLGKKPLKTRELLF</sequence>
<comment type="function">
    <text evidence="1">Involved in DNA repair and RecF pathway recombination.</text>
</comment>
<comment type="similarity">
    <text evidence="2">Belongs to the RecO family.</text>
</comment>
<feature type="chain" id="PRO_0000204948" description="DNA repair protein RecO">
    <location>
        <begin position="1"/>
        <end position="231"/>
    </location>
</feature>
<accession>P51838</accession>
<organism>
    <name type="scientific">Coxiella burnetii (strain RSA 493 / Nine Mile phase I)</name>
    <dbReference type="NCBI Taxonomy" id="227377"/>
    <lineage>
        <taxon>Bacteria</taxon>
        <taxon>Pseudomonadati</taxon>
        <taxon>Pseudomonadota</taxon>
        <taxon>Gammaproteobacteria</taxon>
        <taxon>Legionellales</taxon>
        <taxon>Coxiellaceae</taxon>
        <taxon>Coxiella</taxon>
    </lineage>
</organism>
<name>RECO_COXBU</name>